<reference key="1">
    <citation type="submission" date="2008-06" db="EMBL/GenBank/DDBJ databases">
        <title>Genome and proteome analysis of A. pleuropneumoniae serotype 7.</title>
        <authorList>
            <person name="Linke B."/>
            <person name="Buettner F."/>
            <person name="Martinez-Arias R."/>
            <person name="Goesmann A."/>
            <person name="Baltes N."/>
            <person name="Tegetmeyer H."/>
            <person name="Singh M."/>
            <person name="Gerlach G.F."/>
        </authorList>
    </citation>
    <scope>NUCLEOTIDE SEQUENCE [LARGE SCALE GENOMIC DNA]</scope>
    <source>
        <strain>AP76</strain>
    </source>
</reference>
<feature type="chain" id="PRO_1000091795" description="2-dehydro-3-deoxyphosphooctonate aldolase">
    <location>
        <begin position="1"/>
        <end position="284"/>
    </location>
</feature>
<gene>
    <name evidence="1" type="primary">kdsA</name>
    <name type="ordered locus">APP7_2127</name>
</gene>
<proteinExistence type="inferred from homology"/>
<keyword id="KW-0963">Cytoplasm</keyword>
<keyword id="KW-0448">Lipopolysaccharide biosynthesis</keyword>
<keyword id="KW-0808">Transferase</keyword>
<name>KDSA_ACTP7</name>
<organism>
    <name type="scientific">Actinobacillus pleuropneumoniae serotype 7 (strain AP76)</name>
    <dbReference type="NCBI Taxonomy" id="537457"/>
    <lineage>
        <taxon>Bacteria</taxon>
        <taxon>Pseudomonadati</taxon>
        <taxon>Pseudomonadota</taxon>
        <taxon>Gammaproteobacteria</taxon>
        <taxon>Pasteurellales</taxon>
        <taxon>Pasteurellaceae</taxon>
        <taxon>Actinobacillus</taxon>
    </lineage>
</organism>
<accession>B3GZI6</accession>
<evidence type="ECO:0000255" key="1">
    <source>
        <dbReference type="HAMAP-Rule" id="MF_00056"/>
    </source>
</evidence>
<dbReference type="EC" id="2.5.1.55" evidence="1"/>
<dbReference type="EMBL" id="CP001091">
    <property type="protein sequence ID" value="ACE62779.1"/>
    <property type="molecule type" value="Genomic_DNA"/>
</dbReference>
<dbReference type="RefSeq" id="WP_005595560.1">
    <property type="nucleotide sequence ID" value="NC_010939.1"/>
</dbReference>
<dbReference type="SMR" id="B3GZI6"/>
<dbReference type="GeneID" id="48600342"/>
<dbReference type="KEGG" id="apa:APP7_2127"/>
<dbReference type="HOGENOM" id="CLU_036666_0_0_6"/>
<dbReference type="UniPathway" id="UPA00030"/>
<dbReference type="UniPathway" id="UPA00357">
    <property type="reaction ID" value="UER00474"/>
</dbReference>
<dbReference type="Proteomes" id="UP000001226">
    <property type="component" value="Chromosome"/>
</dbReference>
<dbReference type="GO" id="GO:0005737">
    <property type="term" value="C:cytoplasm"/>
    <property type="evidence" value="ECO:0007669"/>
    <property type="project" value="UniProtKB-SubCell"/>
</dbReference>
<dbReference type="GO" id="GO:0008676">
    <property type="term" value="F:3-deoxy-8-phosphooctulonate synthase activity"/>
    <property type="evidence" value="ECO:0007669"/>
    <property type="project" value="UniProtKB-UniRule"/>
</dbReference>
<dbReference type="GO" id="GO:0019294">
    <property type="term" value="P:keto-3-deoxy-D-manno-octulosonic acid biosynthetic process"/>
    <property type="evidence" value="ECO:0007669"/>
    <property type="project" value="UniProtKB-UniRule"/>
</dbReference>
<dbReference type="FunFam" id="3.20.20.70:FF:000058">
    <property type="entry name" value="2-dehydro-3-deoxyphosphooctonate aldolase"/>
    <property type="match status" value="1"/>
</dbReference>
<dbReference type="Gene3D" id="3.20.20.70">
    <property type="entry name" value="Aldolase class I"/>
    <property type="match status" value="1"/>
</dbReference>
<dbReference type="HAMAP" id="MF_00056">
    <property type="entry name" value="KDO8P_synth"/>
    <property type="match status" value="1"/>
</dbReference>
<dbReference type="InterPro" id="IPR013785">
    <property type="entry name" value="Aldolase_TIM"/>
</dbReference>
<dbReference type="InterPro" id="IPR006218">
    <property type="entry name" value="DAHP1/KDSA"/>
</dbReference>
<dbReference type="InterPro" id="IPR006269">
    <property type="entry name" value="KDO8P_synthase"/>
</dbReference>
<dbReference type="NCBIfam" id="TIGR01362">
    <property type="entry name" value="KDO8P_synth"/>
    <property type="match status" value="1"/>
</dbReference>
<dbReference type="NCBIfam" id="NF003543">
    <property type="entry name" value="PRK05198.1"/>
    <property type="match status" value="1"/>
</dbReference>
<dbReference type="NCBIfam" id="NF009109">
    <property type="entry name" value="PRK12457.1"/>
    <property type="match status" value="1"/>
</dbReference>
<dbReference type="PANTHER" id="PTHR21057">
    <property type="entry name" value="PHOSPHO-2-DEHYDRO-3-DEOXYHEPTONATE ALDOLASE"/>
    <property type="match status" value="1"/>
</dbReference>
<dbReference type="Pfam" id="PF00793">
    <property type="entry name" value="DAHP_synth_1"/>
    <property type="match status" value="1"/>
</dbReference>
<dbReference type="SUPFAM" id="SSF51569">
    <property type="entry name" value="Aldolase"/>
    <property type="match status" value="1"/>
</dbReference>
<comment type="catalytic activity">
    <reaction evidence="1">
        <text>D-arabinose 5-phosphate + phosphoenolpyruvate + H2O = 3-deoxy-alpha-D-manno-2-octulosonate-8-phosphate + phosphate</text>
        <dbReference type="Rhea" id="RHEA:14053"/>
        <dbReference type="ChEBI" id="CHEBI:15377"/>
        <dbReference type="ChEBI" id="CHEBI:43474"/>
        <dbReference type="ChEBI" id="CHEBI:57693"/>
        <dbReference type="ChEBI" id="CHEBI:58702"/>
        <dbReference type="ChEBI" id="CHEBI:85985"/>
        <dbReference type="EC" id="2.5.1.55"/>
    </reaction>
</comment>
<comment type="pathway">
    <text evidence="1">Carbohydrate biosynthesis; 3-deoxy-D-manno-octulosonate biosynthesis; 3-deoxy-D-manno-octulosonate from D-ribulose 5-phosphate: step 2/3.</text>
</comment>
<comment type="pathway">
    <text evidence="1">Bacterial outer membrane biogenesis; lipopolysaccharide biosynthesis.</text>
</comment>
<comment type="subcellular location">
    <subcellularLocation>
        <location evidence="1">Cytoplasm</location>
    </subcellularLocation>
</comment>
<comment type="similarity">
    <text evidence="1">Belongs to the KdsA family.</text>
</comment>
<sequence>MNNKIVKVGNIEVANDKPFTLFGGMNVLESRDMAMRVCEQYVEVTNKLGVPYVFKASFDKANRSSIHSYRGPGMEEGLKIFQELKDTFGVNIITDVHEIYQCKPVAEVVDIIQLPAFLARQTDLVEAMARTGAVINVKKPQFLSPGQMGNIVEKIAECGNENVILCDRGTNFGYDNLVVDMLGFNIMKKVSKGCPVIFDVTHSLQCRDPFGAASGGRRDQVTELARSGMAIGLAGLFLEAHPDPNNAKCDGPSALPLSKLEAFVSQMKAIDDLVKSFEEIDTSN</sequence>
<protein>
    <recommendedName>
        <fullName evidence="1">2-dehydro-3-deoxyphosphooctonate aldolase</fullName>
        <ecNumber evidence="1">2.5.1.55</ecNumber>
    </recommendedName>
    <alternativeName>
        <fullName evidence="1">3-deoxy-D-manno-octulosonic acid 8-phosphate synthase</fullName>
    </alternativeName>
    <alternativeName>
        <fullName evidence="1">KDO-8-phosphate synthase</fullName>
        <shortName evidence="1">KDO 8-P synthase</shortName>
        <shortName evidence="1">KDOPS</shortName>
    </alternativeName>
    <alternativeName>
        <fullName evidence="1">Phospho-2-dehydro-3-deoxyoctonate aldolase</fullName>
    </alternativeName>
</protein>